<dbReference type="EC" id="4.3.2.1" evidence="1"/>
<dbReference type="EMBL" id="CP000141">
    <property type="protein sequence ID" value="ABB14518.1"/>
    <property type="molecule type" value="Genomic_DNA"/>
</dbReference>
<dbReference type="RefSeq" id="WP_011345141.1">
    <property type="nucleotide sequence ID" value="NC_007503.1"/>
</dbReference>
<dbReference type="SMR" id="Q3A9W6"/>
<dbReference type="FunCoup" id="Q3A9W6">
    <property type="interactions" value="379"/>
</dbReference>
<dbReference type="STRING" id="246194.CHY_2259"/>
<dbReference type="KEGG" id="chy:CHY_2259"/>
<dbReference type="eggNOG" id="COG0165">
    <property type="taxonomic scope" value="Bacteria"/>
</dbReference>
<dbReference type="HOGENOM" id="CLU_027272_2_3_9"/>
<dbReference type="InParanoid" id="Q3A9W6"/>
<dbReference type="OrthoDB" id="9769623at2"/>
<dbReference type="UniPathway" id="UPA00068">
    <property type="reaction ID" value="UER00114"/>
</dbReference>
<dbReference type="Proteomes" id="UP000002706">
    <property type="component" value="Chromosome"/>
</dbReference>
<dbReference type="GO" id="GO:0005829">
    <property type="term" value="C:cytosol"/>
    <property type="evidence" value="ECO:0007669"/>
    <property type="project" value="TreeGrafter"/>
</dbReference>
<dbReference type="GO" id="GO:0004056">
    <property type="term" value="F:argininosuccinate lyase activity"/>
    <property type="evidence" value="ECO:0007669"/>
    <property type="project" value="UniProtKB-UniRule"/>
</dbReference>
<dbReference type="GO" id="GO:0042450">
    <property type="term" value="P:arginine biosynthetic process via ornithine"/>
    <property type="evidence" value="ECO:0007669"/>
    <property type="project" value="InterPro"/>
</dbReference>
<dbReference type="GO" id="GO:0006526">
    <property type="term" value="P:L-arginine biosynthetic process"/>
    <property type="evidence" value="ECO:0007669"/>
    <property type="project" value="UniProtKB-UniRule"/>
</dbReference>
<dbReference type="CDD" id="cd01359">
    <property type="entry name" value="Argininosuccinate_lyase"/>
    <property type="match status" value="1"/>
</dbReference>
<dbReference type="FunFam" id="1.10.275.10:FF:000002">
    <property type="entry name" value="Argininosuccinate lyase"/>
    <property type="match status" value="1"/>
</dbReference>
<dbReference type="FunFam" id="1.10.40.30:FF:000001">
    <property type="entry name" value="Argininosuccinate lyase"/>
    <property type="match status" value="1"/>
</dbReference>
<dbReference type="FunFam" id="1.20.200.10:FF:000002">
    <property type="entry name" value="Argininosuccinate lyase"/>
    <property type="match status" value="1"/>
</dbReference>
<dbReference type="Gene3D" id="1.10.40.30">
    <property type="entry name" value="Fumarase/aspartase (C-terminal domain)"/>
    <property type="match status" value="1"/>
</dbReference>
<dbReference type="Gene3D" id="1.20.200.10">
    <property type="entry name" value="Fumarase/aspartase (Central domain)"/>
    <property type="match status" value="1"/>
</dbReference>
<dbReference type="Gene3D" id="1.10.275.10">
    <property type="entry name" value="Fumarase/aspartase (N-terminal domain)"/>
    <property type="match status" value="1"/>
</dbReference>
<dbReference type="HAMAP" id="MF_00006">
    <property type="entry name" value="Arg_succ_lyase"/>
    <property type="match status" value="1"/>
</dbReference>
<dbReference type="InterPro" id="IPR029419">
    <property type="entry name" value="Arg_succ_lyase_C"/>
</dbReference>
<dbReference type="InterPro" id="IPR009049">
    <property type="entry name" value="Argininosuccinate_lyase"/>
</dbReference>
<dbReference type="InterPro" id="IPR024083">
    <property type="entry name" value="Fumarase/histidase_N"/>
</dbReference>
<dbReference type="InterPro" id="IPR020557">
    <property type="entry name" value="Fumarate_lyase_CS"/>
</dbReference>
<dbReference type="InterPro" id="IPR000362">
    <property type="entry name" value="Fumarate_lyase_fam"/>
</dbReference>
<dbReference type="InterPro" id="IPR022761">
    <property type="entry name" value="Fumarate_lyase_N"/>
</dbReference>
<dbReference type="InterPro" id="IPR008948">
    <property type="entry name" value="L-Aspartase-like"/>
</dbReference>
<dbReference type="NCBIfam" id="TIGR00838">
    <property type="entry name" value="argH"/>
    <property type="match status" value="1"/>
</dbReference>
<dbReference type="PANTHER" id="PTHR43814">
    <property type="entry name" value="ARGININOSUCCINATE LYASE"/>
    <property type="match status" value="1"/>
</dbReference>
<dbReference type="PANTHER" id="PTHR43814:SF1">
    <property type="entry name" value="ARGININOSUCCINATE LYASE"/>
    <property type="match status" value="1"/>
</dbReference>
<dbReference type="Pfam" id="PF14698">
    <property type="entry name" value="ASL_C2"/>
    <property type="match status" value="1"/>
</dbReference>
<dbReference type="Pfam" id="PF00206">
    <property type="entry name" value="Lyase_1"/>
    <property type="match status" value="1"/>
</dbReference>
<dbReference type="PRINTS" id="PR00145">
    <property type="entry name" value="ARGSUCLYASE"/>
</dbReference>
<dbReference type="PRINTS" id="PR00149">
    <property type="entry name" value="FUMRATELYASE"/>
</dbReference>
<dbReference type="SUPFAM" id="SSF48557">
    <property type="entry name" value="L-aspartase-like"/>
    <property type="match status" value="1"/>
</dbReference>
<dbReference type="PROSITE" id="PS00163">
    <property type="entry name" value="FUMARATE_LYASES"/>
    <property type="match status" value="1"/>
</dbReference>
<evidence type="ECO:0000255" key="1">
    <source>
        <dbReference type="HAMAP-Rule" id="MF_00006"/>
    </source>
</evidence>
<sequence>MKLWGGRFEKDTDREMRDFHASIHFDWRLYEEDIRGSIAHVTMLARQGIITNEEKEKIIGALTEILEEIKAGKVDFSPEAEDIHLNIETLLIKKIGDVGKKVHTGRSRNDQVALDTRLYVKKEGTAIIALIKELQETLINLAEGHLNTIMPGYTHLQRAQPVTLAHHLLAYFWMFDRDRSRFYDCLKRADRSPLGAGALAGTTLPLDREFVSELLGFNGVCENSLDAVSDRDYILEFLFAAATTMMHLSRFSEEIVLWNSKEFSFVEIDDRYATGSSMMPQKKNPDAAELIRGKTGRVYGNLMAVLTMMKGLPLAYNKDMQEDKEPLFDTVDTLKGSLRVFTGMLKTIKFNQGAMYKAALKGFLNATDLAEYLVEKGVPFREAHRITGELVLKAEKTGRELLELSLDELKEMSPLIEEDIYEKLKIENVLAKRKLFGGPAPQAVIEQLRQAREALA</sequence>
<reference key="1">
    <citation type="journal article" date="2005" name="PLoS Genet.">
        <title>Life in hot carbon monoxide: the complete genome sequence of Carboxydothermus hydrogenoformans Z-2901.</title>
        <authorList>
            <person name="Wu M."/>
            <person name="Ren Q."/>
            <person name="Durkin A.S."/>
            <person name="Daugherty S.C."/>
            <person name="Brinkac L.M."/>
            <person name="Dodson R.J."/>
            <person name="Madupu R."/>
            <person name="Sullivan S.A."/>
            <person name="Kolonay J.F."/>
            <person name="Nelson W.C."/>
            <person name="Tallon L.J."/>
            <person name="Jones K.M."/>
            <person name="Ulrich L.E."/>
            <person name="Gonzalez J.M."/>
            <person name="Zhulin I.B."/>
            <person name="Robb F.T."/>
            <person name="Eisen J.A."/>
        </authorList>
    </citation>
    <scope>NUCLEOTIDE SEQUENCE [LARGE SCALE GENOMIC DNA]</scope>
    <source>
        <strain>ATCC BAA-161 / DSM 6008 / Z-2901</strain>
    </source>
</reference>
<comment type="catalytic activity">
    <reaction evidence="1">
        <text>2-(N(omega)-L-arginino)succinate = fumarate + L-arginine</text>
        <dbReference type="Rhea" id="RHEA:24020"/>
        <dbReference type="ChEBI" id="CHEBI:29806"/>
        <dbReference type="ChEBI" id="CHEBI:32682"/>
        <dbReference type="ChEBI" id="CHEBI:57472"/>
        <dbReference type="EC" id="4.3.2.1"/>
    </reaction>
</comment>
<comment type="pathway">
    <text evidence="1">Amino-acid biosynthesis; L-arginine biosynthesis; L-arginine from L-ornithine and carbamoyl phosphate: step 3/3.</text>
</comment>
<comment type="subcellular location">
    <subcellularLocation>
        <location evidence="1">Cytoplasm</location>
    </subcellularLocation>
</comment>
<comment type="similarity">
    <text evidence="1">Belongs to the lyase 1 family. Argininosuccinate lyase subfamily.</text>
</comment>
<protein>
    <recommendedName>
        <fullName evidence="1">Argininosuccinate lyase</fullName>
        <shortName evidence="1">ASAL</shortName>
        <ecNumber evidence="1">4.3.2.1</ecNumber>
    </recommendedName>
    <alternativeName>
        <fullName evidence="1">Arginosuccinase</fullName>
    </alternativeName>
</protein>
<gene>
    <name evidence="1" type="primary">argH</name>
    <name type="ordered locus">CHY_2259</name>
</gene>
<accession>Q3A9W6</accession>
<organism>
    <name type="scientific">Carboxydothermus hydrogenoformans (strain ATCC BAA-161 / DSM 6008 / Z-2901)</name>
    <dbReference type="NCBI Taxonomy" id="246194"/>
    <lineage>
        <taxon>Bacteria</taxon>
        <taxon>Bacillati</taxon>
        <taxon>Bacillota</taxon>
        <taxon>Clostridia</taxon>
        <taxon>Thermoanaerobacterales</taxon>
        <taxon>Thermoanaerobacteraceae</taxon>
        <taxon>Carboxydothermus</taxon>
    </lineage>
</organism>
<name>ARLY_CARHZ</name>
<proteinExistence type="inferred from homology"/>
<feature type="chain" id="PRO_0000240720" description="Argininosuccinate lyase">
    <location>
        <begin position="1"/>
        <end position="456"/>
    </location>
</feature>
<keyword id="KW-0028">Amino-acid biosynthesis</keyword>
<keyword id="KW-0055">Arginine biosynthesis</keyword>
<keyword id="KW-0963">Cytoplasm</keyword>
<keyword id="KW-0456">Lyase</keyword>
<keyword id="KW-1185">Reference proteome</keyword>